<evidence type="ECO:0000255" key="1">
    <source>
        <dbReference type="HAMAP-Rule" id="MF_01382"/>
    </source>
</evidence>
<evidence type="ECO:0000256" key="2">
    <source>
        <dbReference type="SAM" id="MobiDB-lite"/>
    </source>
</evidence>
<proteinExistence type="inferred from homology"/>
<feature type="chain" id="PRO_0000318350" description="Protein translocase subunit SecA">
    <location>
        <begin position="1"/>
        <end position="833"/>
    </location>
</feature>
<feature type="region of interest" description="Disordered" evidence="2">
    <location>
        <begin position="789"/>
        <end position="816"/>
    </location>
</feature>
<feature type="compositionally biased region" description="Basic and acidic residues" evidence="2">
    <location>
        <begin position="806"/>
        <end position="815"/>
    </location>
</feature>
<feature type="binding site" evidence="1">
    <location>
        <position position="87"/>
    </location>
    <ligand>
        <name>ATP</name>
        <dbReference type="ChEBI" id="CHEBI:30616"/>
    </ligand>
</feature>
<feature type="binding site" evidence="1">
    <location>
        <begin position="105"/>
        <end position="109"/>
    </location>
    <ligand>
        <name>ATP</name>
        <dbReference type="ChEBI" id="CHEBI:30616"/>
    </ligand>
</feature>
<feature type="binding site" evidence="1">
    <location>
        <position position="494"/>
    </location>
    <ligand>
        <name>ATP</name>
        <dbReference type="ChEBI" id="CHEBI:30616"/>
    </ligand>
</feature>
<feature type="binding site" evidence="1">
    <location>
        <position position="819"/>
    </location>
    <ligand>
        <name>Zn(2+)</name>
        <dbReference type="ChEBI" id="CHEBI:29105"/>
    </ligand>
</feature>
<feature type="binding site" evidence="1">
    <location>
        <position position="821"/>
    </location>
    <ligand>
        <name>Zn(2+)</name>
        <dbReference type="ChEBI" id="CHEBI:29105"/>
    </ligand>
</feature>
<feature type="binding site" evidence="1">
    <location>
        <position position="830"/>
    </location>
    <ligand>
        <name>Zn(2+)</name>
        <dbReference type="ChEBI" id="CHEBI:29105"/>
    </ligand>
</feature>
<feature type="binding site" evidence="1">
    <location>
        <position position="831"/>
    </location>
    <ligand>
        <name>Zn(2+)</name>
        <dbReference type="ChEBI" id="CHEBI:29105"/>
    </ligand>
</feature>
<dbReference type="EC" id="7.4.2.8" evidence="1"/>
<dbReference type="EMBL" id="AE017285">
    <property type="protein sequence ID" value="AAS95305.1"/>
    <property type="molecule type" value="Genomic_DNA"/>
</dbReference>
<dbReference type="RefSeq" id="WP_010938126.1">
    <property type="nucleotide sequence ID" value="NC_002937.3"/>
</dbReference>
<dbReference type="RefSeq" id="YP_010046.1">
    <property type="nucleotide sequence ID" value="NC_002937.3"/>
</dbReference>
<dbReference type="SMR" id="Q72DV4"/>
<dbReference type="IntAct" id="Q72DV4">
    <property type="interactions" value="2"/>
</dbReference>
<dbReference type="STRING" id="882.DVU_0825"/>
<dbReference type="PaxDb" id="882-DVU_0825"/>
<dbReference type="EnsemblBacteria" id="AAS95305">
    <property type="protein sequence ID" value="AAS95305"/>
    <property type="gene ID" value="DVU_0825"/>
</dbReference>
<dbReference type="KEGG" id="dvu:DVU_0825"/>
<dbReference type="PATRIC" id="fig|882.5.peg.771"/>
<dbReference type="eggNOG" id="COG0653">
    <property type="taxonomic scope" value="Bacteria"/>
</dbReference>
<dbReference type="HOGENOM" id="CLU_005314_3_0_7"/>
<dbReference type="OrthoDB" id="9805579at2"/>
<dbReference type="PhylomeDB" id="Q72DV4"/>
<dbReference type="Proteomes" id="UP000002194">
    <property type="component" value="Chromosome"/>
</dbReference>
<dbReference type="GO" id="GO:0031522">
    <property type="term" value="C:cell envelope Sec protein transport complex"/>
    <property type="evidence" value="ECO:0007669"/>
    <property type="project" value="TreeGrafter"/>
</dbReference>
<dbReference type="GO" id="GO:0005829">
    <property type="term" value="C:cytosol"/>
    <property type="evidence" value="ECO:0007669"/>
    <property type="project" value="TreeGrafter"/>
</dbReference>
<dbReference type="GO" id="GO:0005886">
    <property type="term" value="C:plasma membrane"/>
    <property type="evidence" value="ECO:0007669"/>
    <property type="project" value="UniProtKB-SubCell"/>
</dbReference>
<dbReference type="GO" id="GO:0005524">
    <property type="term" value="F:ATP binding"/>
    <property type="evidence" value="ECO:0007669"/>
    <property type="project" value="UniProtKB-UniRule"/>
</dbReference>
<dbReference type="GO" id="GO:0046872">
    <property type="term" value="F:metal ion binding"/>
    <property type="evidence" value="ECO:0007669"/>
    <property type="project" value="UniProtKB-KW"/>
</dbReference>
<dbReference type="GO" id="GO:0008564">
    <property type="term" value="F:protein-exporting ATPase activity"/>
    <property type="evidence" value="ECO:0007669"/>
    <property type="project" value="UniProtKB-EC"/>
</dbReference>
<dbReference type="GO" id="GO:0065002">
    <property type="term" value="P:intracellular protein transmembrane transport"/>
    <property type="evidence" value="ECO:0007669"/>
    <property type="project" value="UniProtKB-UniRule"/>
</dbReference>
<dbReference type="GO" id="GO:0017038">
    <property type="term" value="P:protein import"/>
    <property type="evidence" value="ECO:0007669"/>
    <property type="project" value="InterPro"/>
</dbReference>
<dbReference type="GO" id="GO:0006605">
    <property type="term" value="P:protein targeting"/>
    <property type="evidence" value="ECO:0007669"/>
    <property type="project" value="UniProtKB-UniRule"/>
</dbReference>
<dbReference type="GO" id="GO:0043952">
    <property type="term" value="P:protein transport by the Sec complex"/>
    <property type="evidence" value="ECO:0007669"/>
    <property type="project" value="TreeGrafter"/>
</dbReference>
<dbReference type="CDD" id="cd17928">
    <property type="entry name" value="DEXDc_SecA"/>
    <property type="match status" value="1"/>
</dbReference>
<dbReference type="CDD" id="cd18803">
    <property type="entry name" value="SF2_C_secA"/>
    <property type="match status" value="1"/>
</dbReference>
<dbReference type="FunFam" id="3.40.50.300:FF:000694">
    <property type="entry name" value="Preprotein translocase subunit SecA"/>
    <property type="match status" value="1"/>
</dbReference>
<dbReference type="FunFam" id="3.90.1440.10:FF:000001">
    <property type="entry name" value="Preprotein translocase subunit SecA"/>
    <property type="match status" value="1"/>
</dbReference>
<dbReference type="FunFam" id="3.40.50.300:FF:000334">
    <property type="entry name" value="Protein translocase subunit SecA"/>
    <property type="match status" value="1"/>
</dbReference>
<dbReference type="Gene3D" id="1.10.3060.10">
    <property type="entry name" value="Helical scaffold and wing domains of SecA"/>
    <property type="match status" value="1"/>
</dbReference>
<dbReference type="Gene3D" id="3.40.50.300">
    <property type="entry name" value="P-loop containing nucleotide triphosphate hydrolases"/>
    <property type="match status" value="3"/>
</dbReference>
<dbReference type="Gene3D" id="3.90.1440.10">
    <property type="entry name" value="SecA, preprotein cross-linking domain"/>
    <property type="match status" value="1"/>
</dbReference>
<dbReference type="HAMAP" id="MF_01382">
    <property type="entry name" value="SecA"/>
    <property type="match status" value="1"/>
</dbReference>
<dbReference type="InterPro" id="IPR014001">
    <property type="entry name" value="Helicase_ATP-bd"/>
</dbReference>
<dbReference type="InterPro" id="IPR001650">
    <property type="entry name" value="Helicase_C-like"/>
</dbReference>
<dbReference type="InterPro" id="IPR027417">
    <property type="entry name" value="P-loop_NTPase"/>
</dbReference>
<dbReference type="InterPro" id="IPR004027">
    <property type="entry name" value="SEC_C_motif"/>
</dbReference>
<dbReference type="InterPro" id="IPR000185">
    <property type="entry name" value="SecA"/>
</dbReference>
<dbReference type="InterPro" id="IPR020937">
    <property type="entry name" value="SecA_CS"/>
</dbReference>
<dbReference type="InterPro" id="IPR011115">
    <property type="entry name" value="SecA_DEAD"/>
</dbReference>
<dbReference type="InterPro" id="IPR014018">
    <property type="entry name" value="SecA_motor_DEAD"/>
</dbReference>
<dbReference type="InterPro" id="IPR011130">
    <property type="entry name" value="SecA_preprotein_X-link_dom"/>
</dbReference>
<dbReference type="InterPro" id="IPR044722">
    <property type="entry name" value="SecA_SF2_C"/>
</dbReference>
<dbReference type="InterPro" id="IPR011116">
    <property type="entry name" value="SecA_Wing/Scaffold"/>
</dbReference>
<dbReference type="InterPro" id="IPR036266">
    <property type="entry name" value="SecA_Wing/Scaffold_sf"/>
</dbReference>
<dbReference type="InterPro" id="IPR036670">
    <property type="entry name" value="SecA_X-link_sf"/>
</dbReference>
<dbReference type="NCBIfam" id="NF006630">
    <property type="entry name" value="PRK09200.1"/>
    <property type="match status" value="1"/>
</dbReference>
<dbReference type="NCBIfam" id="NF009538">
    <property type="entry name" value="PRK12904.1"/>
    <property type="match status" value="1"/>
</dbReference>
<dbReference type="NCBIfam" id="TIGR00963">
    <property type="entry name" value="secA"/>
    <property type="match status" value="1"/>
</dbReference>
<dbReference type="PANTHER" id="PTHR30612:SF0">
    <property type="entry name" value="CHLOROPLAST PROTEIN-TRANSPORTING ATPASE"/>
    <property type="match status" value="1"/>
</dbReference>
<dbReference type="PANTHER" id="PTHR30612">
    <property type="entry name" value="SECA INNER MEMBRANE COMPONENT OF SEC PROTEIN SECRETION SYSTEM"/>
    <property type="match status" value="1"/>
</dbReference>
<dbReference type="Pfam" id="PF21090">
    <property type="entry name" value="P-loop_SecA"/>
    <property type="match status" value="1"/>
</dbReference>
<dbReference type="Pfam" id="PF02810">
    <property type="entry name" value="SEC-C"/>
    <property type="match status" value="1"/>
</dbReference>
<dbReference type="Pfam" id="PF07517">
    <property type="entry name" value="SecA_DEAD"/>
    <property type="match status" value="1"/>
</dbReference>
<dbReference type="Pfam" id="PF01043">
    <property type="entry name" value="SecA_PP_bind"/>
    <property type="match status" value="1"/>
</dbReference>
<dbReference type="Pfam" id="PF07516">
    <property type="entry name" value="SecA_SW"/>
    <property type="match status" value="1"/>
</dbReference>
<dbReference type="PRINTS" id="PR00906">
    <property type="entry name" value="SECA"/>
</dbReference>
<dbReference type="SMART" id="SM00957">
    <property type="entry name" value="SecA_DEAD"/>
    <property type="match status" value="1"/>
</dbReference>
<dbReference type="SMART" id="SM00958">
    <property type="entry name" value="SecA_PP_bind"/>
    <property type="match status" value="1"/>
</dbReference>
<dbReference type="SUPFAM" id="SSF81886">
    <property type="entry name" value="Helical scaffold and wing domains of SecA"/>
    <property type="match status" value="1"/>
</dbReference>
<dbReference type="SUPFAM" id="SSF52540">
    <property type="entry name" value="P-loop containing nucleoside triphosphate hydrolases"/>
    <property type="match status" value="2"/>
</dbReference>
<dbReference type="SUPFAM" id="SSF81767">
    <property type="entry name" value="Pre-protein crosslinking domain of SecA"/>
    <property type="match status" value="1"/>
</dbReference>
<dbReference type="PROSITE" id="PS01312">
    <property type="entry name" value="SECA"/>
    <property type="match status" value="1"/>
</dbReference>
<dbReference type="PROSITE" id="PS51196">
    <property type="entry name" value="SECA_MOTOR_DEAD"/>
    <property type="match status" value="1"/>
</dbReference>
<name>SECA_NITV2</name>
<gene>
    <name evidence="1" type="primary">secA</name>
    <name type="ordered locus">DVU_0825</name>
</gene>
<protein>
    <recommendedName>
        <fullName evidence="1">Protein translocase subunit SecA</fullName>
        <ecNumber evidence="1">7.4.2.8</ecNumber>
    </recommendedName>
</protein>
<comment type="function">
    <text evidence="1">Part of the Sec protein translocase complex. Interacts with the SecYEG preprotein conducting channel. Has a central role in coupling the hydrolysis of ATP to the transfer of proteins into and across the cell membrane, serving as an ATP-driven molecular motor driving the stepwise translocation of polypeptide chains across the membrane.</text>
</comment>
<comment type="catalytic activity">
    <reaction evidence="1">
        <text>ATP + H2O + cellular proteinSide 1 = ADP + phosphate + cellular proteinSide 2.</text>
        <dbReference type="EC" id="7.4.2.8"/>
    </reaction>
</comment>
<comment type="cofactor">
    <cofactor evidence="1">
        <name>Zn(2+)</name>
        <dbReference type="ChEBI" id="CHEBI:29105"/>
    </cofactor>
    <text evidence="1">May bind 1 zinc ion per subunit.</text>
</comment>
<comment type="subunit">
    <text evidence="1">Monomer and homodimer. Part of the essential Sec protein translocation apparatus which comprises SecA, SecYEG and auxiliary proteins SecDF-YajC and YidC.</text>
</comment>
<comment type="subcellular location">
    <subcellularLocation>
        <location evidence="1">Cell inner membrane</location>
        <topology evidence="1">Peripheral membrane protein</topology>
        <orientation evidence="1">Cytoplasmic side</orientation>
    </subcellularLocation>
    <subcellularLocation>
        <location evidence="1">Cytoplasm</location>
    </subcellularLocation>
    <text evidence="1">Distribution is 50-50.</text>
</comment>
<comment type="similarity">
    <text evidence="1">Belongs to the SecA family.</text>
</comment>
<reference key="1">
    <citation type="journal article" date="2004" name="Nat. Biotechnol.">
        <title>The genome sequence of the anaerobic, sulfate-reducing bacterium Desulfovibrio vulgaris Hildenborough.</title>
        <authorList>
            <person name="Heidelberg J.F."/>
            <person name="Seshadri R."/>
            <person name="Haveman S.A."/>
            <person name="Hemme C.L."/>
            <person name="Paulsen I.T."/>
            <person name="Kolonay J.F."/>
            <person name="Eisen J.A."/>
            <person name="Ward N.L."/>
            <person name="Methe B.A."/>
            <person name="Brinkac L.M."/>
            <person name="Daugherty S.C."/>
            <person name="DeBoy R.T."/>
            <person name="Dodson R.J."/>
            <person name="Durkin A.S."/>
            <person name="Madupu R."/>
            <person name="Nelson W.C."/>
            <person name="Sullivan S.A."/>
            <person name="Fouts D.E."/>
            <person name="Haft D.H."/>
            <person name="Selengut J."/>
            <person name="Peterson J.D."/>
            <person name="Davidsen T.M."/>
            <person name="Zafar N."/>
            <person name="Zhou L."/>
            <person name="Radune D."/>
            <person name="Dimitrov G."/>
            <person name="Hance M."/>
            <person name="Tran K."/>
            <person name="Khouri H.M."/>
            <person name="Gill J."/>
            <person name="Utterback T.R."/>
            <person name="Feldblyum T.V."/>
            <person name="Wall J.D."/>
            <person name="Voordouw G."/>
            <person name="Fraser C.M."/>
        </authorList>
    </citation>
    <scope>NUCLEOTIDE SEQUENCE [LARGE SCALE GENOMIC DNA]</scope>
    <source>
        <strain>ATCC 29579 / DSM 644 / CCUG 34227 / NCIMB 8303 / VKM B-1760 / Hildenborough</strain>
    </source>
</reference>
<sequence>MLGFLFKKVFGSKNDRYIKRLRPIVAAINALEPQMQSLRDEDFPVRIAEYRQQVEEGRKLDDMLPEVFALVREAGKRVFNMRHFDVQLVGGMALHHGKIAEMKTGEGKTLVATLPVVLNALTGKGVHVVTVNDYLAKRDAAWMGQLYNFLGLSVGVIVHGLDDEQRKAAYGADITYGTNNEFGFDYLRDNMKFYAEQLVQRGHNFAIVDEVDSILIDEARTPLIISGASEESTGLYRHMDEIVRKLTRDTHFTVDEKARTAMLTDEGVAFCEKLVGIDNLYDPGNITTQHHLMQALKAHNLFRRDVDYIVKEGQVVIVDEFTGRLMPGRRFSDGLHQALEAKEAVKIEAENQTLASITFQNYFRMYAKLAGMTGTADTEAVEFHQIYSLEVVSIPTNKPMQRKDFADAIYRTKREKYDAIAQAIAELHKAGQPVLVGTISIETSELLSTMLKKTGVPHSVLNAKHHEKEAEIVALAGQRGHVTIATNMAGRGTDIVLGEGVRELGGLHILGTERHESRRIDNQLRGRSGRQGDPGSSRFYLSLEDDLMRLFGSERISGLMEKLGMEEGEPIEARMVSRAIENAQKRVEGHNFEIRKTLLDYDNVMNQQREVIYTLRRDAMSAPDLGPTMEEFLDDVLEDVYAPAEGGEAPSADTVAAVWGRLADVCNITRVMQPAPALPTRDEARAAVLSILHELREDTGESYRDIIRYFMLEELDRCWKEHLRNMDHLRDGIGLRGYGQRDPKLEYKREGFAMFQEMLFRIKEGVFRSLTRLRVQRVEEEAFRHKEQPAAVAYSGGEAEAGPAQPHREDPKVGRNDLCPCGSGRKYKKCCGA</sequence>
<organism>
    <name type="scientific">Nitratidesulfovibrio vulgaris (strain ATCC 29579 / DSM 644 / CCUG 34227 / NCIMB 8303 / VKM B-1760 / Hildenborough)</name>
    <name type="common">Desulfovibrio vulgaris</name>
    <dbReference type="NCBI Taxonomy" id="882"/>
    <lineage>
        <taxon>Bacteria</taxon>
        <taxon>Pseudomonadati</taxon>
        <taxon>Thermodesulfobacteriota</taxon>
        <taxon>Desulfovibrionia</taxon>
        <taxon>Desulfovibrionales</taxon>
        <taxon>Desulfovibrionaceae</taxon>
        <taxon>Nitratidesulfovibrio</taxon>
    </lineage>
</organism>
<accession>Q72DV4</accession>
<keyword id="KW-0067">ATP-binding</keyword>
<keyword id="KW-0997">Cell inner membrane</keyword>
<keyword id="KW-1003">Cell membrane</keyword>
<keyword id="KW-0963">Cytoplasm</keyword>
<keyword id="KW-0472">Membrane</keyword>
<keyword id="KW-0479">Metal-binding</keyword>
<keyword id="KW-0547">Nucleotide-binding</keyword>
<keyword id="KW-0653">Protein transport</keyword>
<keyword id="KW-1185">Reference proteome</keyword>
<keyword id="KW-1278">Translocase</keyword>
<keyword id="KW-0811">Translocation</keyword>
<keyword id="KW-0813">Transport</keyword>
<keyword id="KW-0862">Zinc</keyword>